<keyword id="KW-0285">Flavoprotein</keyword>
<keyword id="KW-0288">FMN</keyword>
<keyword id="KW-0560">Oxidoreductase</keyword>
<keyword id="KW-0664">Pyridoxine biosynthesis</keyword>
<organism>
    <name type="scientific">Mannheimia succiniciproducens (strain KCTC 0769BP / MBEL55E)</name>
    <dbReference type="NCBI Taxonomy" id="221988"/>
    <lineage>
        <taxon>Bacteria</taxon>
        <taxon>Pseudomonadati</taxon>
        <taxon>Pseudomonadota</taxon>
        <taxon>Gammaproteobacteria</taxon>
        <taxon>Pasteurellales</taxon>
        <taxon>Pasteurellaceae</taxon>
        <taxon>Basfia</taxon>
    </lineage>
</organism>
<dbReference type="EC" id="1.4.3.5" evidence="1"/>
<dbReference type="EMBL" id="AE016827">
    <property type="protein sequence ID" value="AAU38671.1"/>
    <property type="molecule type" value="Genomic_DNA"/>
</dbReference>
<dbReference type="SMR" id="Q65QT9"/>
<dbReference type="STRING" id="221988.MS2064"/>
<dbReference type="KEGG" id="msu:MS2064"/>
<dbReference type="eggNOG" id="COG0259">
    <property type="taxonomic scope" value="Bacteria"/>
</dbReference>
<dbReference type="HOGENOM" id="CLU_032263_2_2_6"/>
<dbReference type="UniPathway" id="UPA01068">
    <property type="reaction ID" value="UER00304"/>
</dbReference>
<dbReference type="UniPathway" id="UPA01068">
    <property type="reaction ID" value="UER00305"/>
</dbReference>
<dbReference type="Proteomes" id="UP000000607">
    <property type="component" value="Chromosome"/>
</dbReference>
<dbReference type="GO" id="GO:0010181">
    <property type="term" value="F:FMN binding"/>
    <property type="evidence" value="ECO:0007669"/>
    <property type="project" value="UniProtKB-UniRule"/>
</dbReference>
<dbReference type="GO" id="GO:0004733">
    <property type="term" value="F:pyridoxamine phosphate oxidase activity"/>
    <property type="evidence" value="ECO:0007669"/>
    <property type="project" value="UniProtKB-UniRule"/>
</dbReference>
<dbReference type="GO" id="GO:0008615">
    <property type="term" value="P:pyridoxine biosynthetic process"/>
    <property type="evidence" value="ECO:0007669"/>
    <property type="project" value="UniProtKB-KW"/>
</dbReference>
<dbReference type="FunFam" id="2.30.110.10:FF:000014">
    <property type="entry name" value="Pyridoxine/pyridoxamine 5'-phosphate oxidase"/>
    <property type="match status" value="1"/>
</dbReference>
<dbReference type="Gene3D" id="2.30.110.10">
    <property type="entry name" value="Electron Transport, Fmn-binding Protein, Chain A"/>
    <property type="match status" value="1"/>
</dbReference>
<dbReference type="HAMAP" id="MF_01629">
    <property type="entry name" value="PdxH"/>
    <property type="match status" value="1"/>
</dbReference>
<dbReference type="InterPro" id="IPR000659">
    <property type="entry name" value="Pyridox_Oxase"/>
</dbReference>
<dbReference type="InterPro" id="IPR019740">
    <property type="entry name" value="Pyridox_Oxase_CS"/>
</dbReference>
<dbReference type="InterPro" id="IPR011576">
    <property type="entry name" value="Pyridox_Oxase_N"/>
</dbReference>
<dbReference type="InterPro" id="IPR019576">
    <property type="entry name" value="Pyridoxamine_oxidase_dimer_C"/>
</dbReference>
<dbReference type="InterPro" id="IPR012349">
    <property type="entry name" value="Split_barrel_FMN-bd"/>
</dbReference>
<dbReference type="NCBIfam" id="TIGR00558">
    <property type="entry name" value="pdxH"/>
    <property type="match status" value="1"/>
</dbReference>
<dbReference type="NCBIfam" id="NF004231">
    <property type="entry name" value="PRK05679.1"/>
    <property type="match status" value="1"/>
</dbReference>
<dbReference type="PANTHER" id="PTHR10851:SF0">
    <property type="entry name" value="PYRIDOXINE-5'-PHOSPHATE OXIDASE"/>
    <property type="match status" value="1"/>
</dbReference>
<dbReference type="PANTHER" id="PTHR10851">
    <property type="entry name" value="PYRIDOXINE-5-PHOSPHATE OXIDASE"/>
    <property type="match status" value="1"/>
</dbReference>
<dbReference type="Pfam" id="PF10590">
    <property type="entry name" value="PNP_phzG_C"/>
    <property type="match status" value="1"/>
</dbReference>
<dbReference type="Pfam" id="PF01243">
    <property type="entry name" value="PNPOx_N"/>
    <property type="match status" value="1"/>
</dbReference>
<dbReference type="PIRSF" id="PIRSF000190">
    <property type="entry name" value="Pyd_amn-ph_oxd"/>
    <property type="match status" value="1"/>
</dbReference>
<dbReference type="SUPFAM" id="SSF50475">
    <property type="entry name" value="FMN-binding split barrel"/>
    <property type="match status" value="1"/>
</dbReference>
<dbReference type="PROSITE" id="PS01064">
    <property type="entry name" value="PYRIDOX_OXIDASE"/>
    <property type="match status" value="1"/>
</dbReference>
<proteinExistence type="inferred from homology"/>
<comment type="function">
    <text evidence="1">Catalyzes the oxidation of either pyridoxine 5'-phosphate (PNP) or pyridoxamine 5'-phosphate (PMP) into pyridoxal 5'-phosphate (PLP).</text>
</comment>
<comment type="catalytic activity">
    <reaction evidence="1">
        <text>pyridoxamine 5'-phosphate + O2 + H2O = pyridoxal 5'-phosphate + H2O2 + NH4(+)</text>
        <dbReference type="Rhea" id="RHEA:15817"/>
        <dbReference type="ChEBI" id="CHEBI:15377"/>
        <dbReference type="ChEBI" id="CHEBI:15379"/>
        <dbReference type="ChEBI" id="CHEBI:16240"/>
        <dbReference type="ChEBI" id="CHEBI:28938"/>
        <dbReference type="ChEBI" id="CHEBI:58451"/>
        <dbReference type="ChEBI" id="CHEBI:597326"/>
        <dbReference type="EC" id="1.4.3.5"/>
    </reaction>
</comment>
<comment type="catalytic activity">
    <reaction evidence="1">
        <text>pyridoxine 5'-phosphate + O2 = pyridoxal 5'-phosphate + H2O2</text>
        <dbReference type="Rhea" id="RHEA:15149"/>
        <dbReference type="ChEBI" id="CHEBI:15379"/>
        <dbReference type="ChEBI" id="CHEBI:16240"/>
        <dbReference type="ChEBI" id="CHEBI:58589"/>
        <dbReference type="ChEBI" id="CHEBI:597326"/>
        <dbReference type="EC" id="1.4.3.5"/>
    </reaction>
</comment>
<comment type="cofactor">
    <cofactor evidence="1">
        <name>FMN</name>
        <dbReference type="ChEBI" id="CHEBI:58210"/>
    </cofactor>
    <text evidence="1">Binds 1 FMN per subunit.</text>
</comment>
<comment type="pathway">
    <text evidence="1">Cofactor metabolism; pyridoxal 5'-phosphate salvage; pyridoxal 5'-phosphate from pyridoxamine 5'-phosphate: step 1/1.</text>
</comment>
<comment type="pathway">
    <text evidence="1">Cofactor metabolism; pyridoxal 5'-phosphate salvage; pyridoxal 5'-phosphate from pyridoxine 5'-phosphate: step 1/1.</text>
</comment>
<comment type="subunit">
    <text evidence="1">Homodimer.</text>
</comment>
<comment type="similarity">
    <text evidence="1">Belongs to the pyridoxamine 5'-phosphate oxidase family.</text>
</comment>
<sequence length="211" mass="24163">MIDLHNIRNEYSQQALSEKQCDDDPLKQLEKWLNEAIQAKVNEPTAMNVATVGENGKPSSRVVLLKEVNERGLVFFTNYHSHKGRDLAVNPFAAVNLFWAELQRQVRVEGRVERISPQASDEYFASRPYTSRIGAWASEQSAVISGKNSLLTKAALIAAKHPLQVPRPPHWGGYIVIPELIEFWQGRPSRLHDRIRYRLEKGEWVRERLSP</sequence>
<feature type="chain" id="PRO_0000167719" description="Pyridoxine/pyridoxamine 5'-phosphate oxidase">
    <location>
        <begin position="1"/>
        <end position="211"/>
    </location>
</feature>
<feature type="binding site" evidence="1">
    <location>
        <begin position="8"/>
        <end position="11"/>
    </location>
    <ligand>
        <name>substrate</name>
    </ligand>
</feature>
<feature type="binding site" evidence="1">
    <location>
        <begin position="61"/>
        <end position="66"/>
    </location>
    <ligand>
        <name>FMN</name>
        <dbReference type="ChEBI" id="CHEBI:58210"/>
    </ligand>
</feature>
<feature type="binding site" evidence="1">
    <location>
        <position position="66"/>
    </location>
    <ligand>
        <name>substrate</name>
    </ligand>
</feature>
<feature type="binding site" evidence="1">
    <location>
        <begin position="76"/>
        <end position="77"/>
    </location>
    <ligand>
        <name>FMN</name>
        <dbReference type="ChEBI" id="CHEBI:58210"/>
    </ligand>
</feature>
<feature type="binding site" evidence="1">
    <location>
        <position position="83"/>
    </location>
    <ligand>
        <name>FMN</name>
        <dbReference type="ChEBI" id="CHEBI:58210"/>
    </ligand>
</feature>
<feature type="binding site" evidence="1">
    <location>
        <position position="105"/>
    </location>
    <ligand>
        <name>FMN</name>
        <dbReference type="ChEBI" id="CHEBI:58210"/>
    </ligand>
</feature>
<feature type="binding site" evidence="1">
    <location>
        <position position="123"/>
    </location>
    <ligand>
        <name>substrate</name>
    </ligand>
</feature>
<feature type="binding site" evidence="1">
    <location>
        <position position="127"/>
    </location>
    <ligand>
        <name>substrate</name>
    </ligand>
</feature>
<feature type="binding site" evidence="1">
    <location>
        <position position="131"/>
    </location>
    <ligand>
        <name>substrate</name>
    </ligand>
</feature>
<feature type="binding site" evidence="1">
    <location>
        <begin position="140"/>
        <end position="141"/>
    </location>
    <ligand>
        <name>FMN</name>
        <dbReference type="ChEBI" id="CHEBI:58210"/>
    </ligand>
</feature>
<feature type="binding site" evidence="1">
    <location>
        <position position="184"/>
    </location>
    <ligand>
        <name>FMN</name>
        <dbReference type="ChEBI" id="CHEBI:58210"/>
    </ligand>
</feature>
<feature type="binding site" evidence="1">
    <location>
        <begin position="190"/>
        <end position="192"/>
    </location>
    <ligand>
        <name>substrate</name>
    </ligand>
</feature>
<feature type="binding site" evidence="1">
    <location>
        <position position="194"/>
    </location>
    <ligand>
        <name>FMN</name>
        <dbReference type="ChEBI" id="CHEBI:58210"/>
    </ligand>
</feature>
<name>PDXH_MANSM</name>
<accession>Q65QT9</accession>
<protein>
    <recommendedName>
        <fullName evidence="1">Pyridoxine/pyridoxamine 5'-phosphate oxidase</fullName>
        <ecNumber evidence="1">1.4.3.5</ecNumber>
    </recommendedName>
    <alternativeName>
        <fullName evidence="1">PNP/PMP oxidase</fullName>
        <shortName evidence="1">PNPOx</shortName>
    </alternativeName>
    <alternativeName>
        <fullName evidence="1">Pyridoxal 5'-phosphate synthase</fullName>
    </alternativeName>
</protein>
<evidence type="ECO:0000255" key="1">
    <source>
        <dbReference type="HAMAP-Rule" id="MF_01629"/>
    </source>
</evidence>
<gene>
    <name evidence="1" type="primary">pdxH</name>
    <name type="ordered locus">MS2064</name>
</gene>
<reference key="1">
    <citation type="journal article" date="2004" name="Nat. Biotechnol.">
        <title>The genome sequence of the capnophilic rumen bacterium Mannheimia succiniciproducens.</title>
        <authorList>
            <person name="Hong S.H."/>
            <person name="Kim J.S."/>
            <person name="Lee S.Y."/>
            <person name="In Y.H."/>
            <person name="Choi S.S."/>
            <person name="Rih J.-K."/>
            <person name="Kim C.H."/>
            <person name="Jeong H."/>
            <person name="Hur C.G."/>
            <person name="Kim J.J."/>
        </authorList>
    </citation>
    <scope>NUCLEOTIDE SEQUENCE [LARGE SCALE GENOMIC DNA]</scope>
    <source>
        <strain>KCTC 0769BP / MBEL55E</strain>
    </source>
</reference>